<organism>
    <name type="scientific">Drosophila melanogaster</name>
    <name type="common">Fruit fly</name>
    <dbReference type="NCBI Taxonomy" id="7227"/>
    <lineage>
        <taxon>Eukaryota</taxon>
        <taxon>Metazoa</taxon>
        <taxon>Ecdysozoa</taxon>
        <taxon>Arthropoda</taxon>
        <taxon>Hexapoda</taxon>
        <taxon>Insecta</taxon>
        <taxon>Pterygota</taxon>
        <taxon>Neoptera</taxon>
        <taxon>Endopterygota</taxon>
        <taxon>Diptera</taxon>
        <taxon>Brachycera</taxon>
        <taxon>Muscomorpha</taxon>
        <taxon>Ephydroidea</taxon>
        <taxon>Drosophilidae</taxon>
        <taxon>Drosophila</taxon>
        <taxon>Sophophora</taxon>
    </lineage>
</organism>
<proteinExistence type="evidence at transcript level"/>
<protein>
    <recommendedName>
        <fullName>Interleukin enhancer-binding factor 2 homolog</fullName>
    </recommendedName>
</protein>
<feature type="chain" id="PRO_0000126069" description="Interleukin enhancer-binding factor 2 homolog">
    <location>
        <begin position="1"/>
        <end position="396"/>
    </location>
</feature>
<feature type="domain" description="DZF" evidence="2">
    <location>
        <begin position="22"/>
        <end position="379"/>
    </location>
</feature>
<feature type="region of interest" description="Disordered" evidence="3">
    <location>
        <begin position="367"/>
        <end position="396"/>
    </location>
</feature>
<feature type="compositionally biased region" description="Acidic residues" evidence="3">
    <location>
        <begin position="374"/>
        <end position="396"/>
    </location>
</feature>
<accession>Q9VG73</accession>
<evidence type="ECO:0000250" key="1"/>
<evidence type="ECO:0000255" key="2">
    <source>
        <dbReference type="PROSITE-ProRule" id="PRU01040"/>
    </source>
</evidence>
<evidence type="ECO:0000256" key="3">
    <source>
        <dbReference type="SAM" id="MobiDB-lite"/>
    </source>
</evidence>
<comment type="function">
    <text evidence="1">May regulate transcription of undefined genes.</text>
</comment>
<comment type="subcellular location">
    <subcellularLocation>
        <location evidence="1">Nucleus</location>
    </subcellularLocation>
</comment>
<reference key="1">
    <citation type="journal article" date="2000" name="Science">
        <title>The genome sequence of Drosophila melanogaster.</title>
        <authorList>
            <person name="Adams M.D."/>
            <person name="Celniker S.E."/>
            <person name="Holt R.A."/>
            <person name="Evans C.A."/>
            <person name="Gocayne J.D."/>
            <person name="Amanatides P.G."/>
            <person name="Scherer S.E."/>
            <person name="Li P.W."/>
            <person name="Hoskins R.A."/>
            <person name="Galle R.F."/>
            <person name="George R.A."/>
            <person name="Lewis S.E."/>
            <person name="Richards S."/>
            <person name="Ashburner M."/>
            <person name="Henderson S.N."/>
            <person name="Sutton G.G."/>
            <person name="Wortman J.R."/>
            <person name="Yandell M.D."/>
            <person name="Zhang Q."/>
            <person name="Chen L.X."/>
            <person name="Brandon R.C."/>
            <person name="Rogers Y.-H.C."/>
            <person name="Blazej R.G."/>
            <person name="Champe M."/>
            <person name="Pfeiffer B.D."/>
            <person name="Wan K.H."/>
            <person name="Doyle C."/>
            <person name="Baxter E.G."/>
            <person name="Helt G."/>
            <person name="Nelson C.R."/>
            <person name="Miklos G.L.G."/>
            <person name="Abril J.F."/>
            <person name="Agbayani A."/>
            <person name="An H.-J."/>
            <person name="Andrews-Pfannkoch C."/>
            <person name="Baldwin D."/>
            <person name="Ballew R.M."/>
            <person name="Basu A."/>
            <person name="Baxendale J."/>
            <person name="Bayraktaroglu L."/>
            <person name="Beasley E.M."/>
            <person name="Beeson K.Y."/>
            <person name="Benos P.V."/>
            <person name="Berman B.P."/>
            <person name="Bhandari D."/>
            <person name="Bolshakov S."/>
            <person name="Borkova D."/>
            <person name="Botchan M.R."/>
            <person name="Bouck J."/>
            <person name="Brokstein P."/>
            <person name="Brottier P."/>
            <person name="Burtis K.C."/>
            <person name="Busam D.A."/>
            <person name="Butler H."/>
            <person name="Cadieu E."/>
            <person name="Center A."/>
            <person name="Chandra I."/>
            <person name="Cherry J.M."/>
            <person name="Cawley S."/>
            <person name="Dahlke C."/>
            <person name="Davenport L.B."/>
            <person name="Davies P."/>
            <person name="de Pablos B."/>
            <person name="Delcher A."/>
            <person name="Deng Z."/>
            <person name="Mays A.D."/>
            <person name="Dew I."/>
            <person name="Dietz S.M."/>
            <person name="Dodson K."/>
            <person name="Doup L.E."/>
            <person name="Downes M."/>
            <person name="Dugan-Rocha S."/>
            <person name="Dunkov B.C."/>
            <person name="Dunn P."/>
            <person name="Durbin K.J."/>
            <person name="Evangelista C.C."/>
            <person name="Ferraz C."/>
            <person name="Ferriera S."/>
            <person name="Fleischmann W."/>
            <person name="Fosler C."/>
            <person name="Gabrielian A.E."/>
            <person name="Garg N.S."/>
            <person name="Gelbart W.M."/>
            <person name="Glasser K."/>
            <person name="Glodek A."/>
            <person name="Gong F."/>
            <person name="Gorrell J.H."/>
            <person name="Gu Z."/>
            <person name="Guan P."/>
            <person name="Harris M."/>
            <person name="Harris N.L."/>
            <person name="Harvey D.A."/>
            <person name="Heiman T.J."/>
            <person name="Hernandez J.R."/>
            <person name="Houck J."/>
            <person name="Hostin D."/>
            <person name="Houston K.A."/>
            <person name="Howland T.J."/>
            <person name="Wei M.-H."/>
            <person name="Ibegwam C."/>
            <person name="Jalali M."/>
            <person name="Kalush F."/>
            <person name="Karpen G.H."/>
            <person name="Ke Z."/>
            <person name="Kennison J.A."/>
            <person name="Ketchum K.A."/>
            <person name="Kimmel B.E."/>
            <person name="Kodira C.D."/>
            <person name="Kraft C.L."/>
            <person name="Kravitz S."/>
            <person name="Kulp D."/>
            <person name="Lai Z."/>
            <person name="Lasko P."/>
            <person name="Lei Y."/>
            <person name="Levitsky A.A."/>
            <person name="Li J.H."/>
            <person name="Li Z."/>
            <person name="Liang Y."/>
            <person name="Lin X."/>
            <person name="Liu X."/>
            <person name="Mattei B."/>
            <person name="McIntosh T.C."/>
            <person name="McLeod M.P."/>
            <person name="McPherson D."/>
            <person name="Merkulov G."/>
            <person name="Milshina N.V."/>
            <person name="Mobarry C."/>
            <person name="Morris J."/>
            <person name="Moshrefi A."/>
            <person name="Mount S.M."/>
            <person name="Moy M."/>
            <person name="Murphy B."/>
            <person name="Murphy L."/>
            <person name="Muzny D.M."/>
            <person name="Nelson D.L."/>
            <person name="Nelson D.R."/>
            <person name="Nelson K.A."/>
            <person name="Nixon K."/>
            <person name="Nusskern D.R."/>
            <person name="Pacleb J.M."/>
            <person name="Palazzolo M."/>
            <person name="Pittman G.S."/>
            <person name="Pan S."/>
            <person name="Pollard J."/>
            <person name="Puri V."/>
            <person name="Reese M.G."/>
            <person name="Reinert K."/>
            <person name="Remington K."/>
            <person name="Saunders R.D.C."/>
            <person name="Scheeler F."/>
            <person name="Shen H."/>
            <person name="Shue B.C."/>
            <person name="Siden-Kiamos I."/>
            <person name="Simpson M."/>
            <person name="Skupski M.P."/>
            <person name="Smith T.J."/>
            <person name="Spier E."/>
            <person name="Spradling A.C."/>
            <person name="Stapleton M."/>
            <person name="Strong R."/>
            <person name="Sun E."/>
            <person name="Svirskas R."/>
            <person name="Tector C."/>
            <person name="Turner R."/>
            <person name="Venter E."/>
            <person name="Wang A.H."/>
            <person name="Wang X."/>
            <person name="Wang Z.-Y."/>
            <person name="Wassarman D.A."/>
            <person name="Weinstock G.M."/>
            <person name="Weissenbach J."/>
            <person name="Williams S.M."/>
            <person name="Woodage T."/>
            <person name="Worley K.C."/>
            <person name="Wu D."/>
            <person name="Yang S."/>
            <person name="Yao Q.A."/>
            <person name="Ye J."/>
            <person name="Yeh R.-F."/>
            <person name="Zaveri J.S."/>
            <person name="Zhan M."/>
            <person name="Zhang G."/>
            <person name="Zhao Q."/>
            <person name="Zheng L."/>
            <person name="Zheng X.H."/>
            <person name="Zhong F.N."/>
            <person name="Zhong W."/>
            <person name="Zhou X."/>
            <person name="Zhu S.C."/>
            <person name="Zhu X."/>
            <person name="Smith H.O."/>
            <person name="Gibbs R.A."/>
            <person name="Myers E.W."/>
            <person name="Rubin G.M."/>
            <person name="Venter J.C."/>
        </authorList>
    </citation>
    <scope>NUCLEOTIDE SEQUENCE [LARGE SCALE GENOMIC DNA]</scope>
    <source>
        <strain>Berkeley</strain>
    </source>
</reference>
<reference key="2">
    <citation type="journal article" date="2002" name="Genome Biol.">
        <title>Annotation of the Drosophila melanogaster euchromatic genome: a systematic review.</title>
        <authorList>
            <person name="Misra S."/>
            <person name="Crosby M.A."/>
            <person name="Mungall C.J."/>
            <person name="Matthews B.B."/>
            <person name="Campbell K.S."/>
            <person name="Hradecky P."/>
            <person name="Huang Y."/>
            <person name="Kaminker J.S."/>
            <person name="Millburn G.H."/>
            <person name="Prochnik S.E."/>
            <person name="Smith C.D."/>
            <person name="Tupy J.L."/>
            <person name="Whitfield E.J."/>
            <person name="Bayraktaroglu L."/>
            <person name="Berman B.P."/>
            <person name="Bettencourt B.R."/>
            <person name="Celniker S.E."/>
            <person name="de Grey A.D.N.J."/>
            <person name="Drysdale R.A."/>
            <person name="Harris N.L."/>
            <person name="Richter J."/>
            <person name="Russo S."/>
            <person name="Schroeder A.J."/>
            <person name="Shu S.Q."/>
            <person name="Stapleton M."/>
            <person name="Yamada C."/>
            <person name="Ashburner M."/>
            <person name="Gelbart W.M."/>
            <person name="Rubin G.M."/>
            <person name="Lewis S.E."/>
        </authorList>
    </citation>
    <scope>GENOME REANNOTATION</scope>
    <source>
        <strain>Berkeley</strain>
    </source>
</reference>
<reference key="3">
    <citation type="journal article" date="2002" name="Genome Biol.">
        <title>A Drosophila full-length cDNA resource.</title>
        <authorList>
            <person name="Stapleton M."/>
            <person name="Carlson J.W."/>
            <person name="Brokstein P."/>
            <person name="Yu C."/>
            <person name="Champe M."/>
            <person name="George R.A."/>
            <person name="Guarin H."/>
            <person name="Kronmiller B."/>
            <person name="Pacleb J.M."/>
            <person name="Park S."/>
            <person name="Wan K.H."/>
            <person name="Rubin G.M."/>
            <person name="Celniker S.E."/>
        </authorList>
    </citation>
    <scope>NUCLEOTIDE SEQUENCE [LARGE SCALE MRNA]</scope>
    <source>
        <strain>Berkeley</strain>
        <tissue>Head</tissue>
    </source>
</reference>
<name>ILF2_DROME</name>
<keyword id="KW-0010">Activator</keyword>
<keyword id="KW-0238">DNA-binding</keyword>
<keyword id="KW-0539">Nucleus</keyword>
<keyword id="KW-1185">Reference proteome</keyword>
<keyword id="KW-0804">Transcription</keyword>
<keyword id="KW-0805">Transcription regulation</keyword>
<gene>
    <name type="ORF">CG5641</name>
</gene>
<dbReference type="EMBL" id="AE014297">
    <property type="protein sequence ID" value="AAF54812.1"/>
    <property type="molecule type" value="Genomic_DNA"/>
</dbReference>
<dbReference type="EMBL" id="AY051610">
    <property type="protein sequence ID" value="AAK93034.1"/>
    <property type="molecule type" value="mRNA"/>
</dbReference>
<dbReference type="RefSeq" id="NP_650196.1">
    <property type="nucleotide sequence ID" value="NM_141939.4"/>
</dbReference>
<dbReference type="SMR" id="Q9VG73"/>
<dbReference type="BioGRID" id="66627">
    <property type="interactions" value="6"/>
</dbReference>
<dbReference type="FunCoup" id="Q9VG73">
    <property type="interactions" value="1835"/>
</dbReference>
<dbReference type="IntAct" id="Q9VG73">
    <property type="interactions" value="18"/>
</dbReference>
<dbReference type="STRING" id="7227.FBpp0082066"/>
<dbReference type="GlyGen" id="Q9VG73">
    <property type="glycosylation" value="1 site"/>
</dbReference>
<dbReference type="PaxDb" id="7227-FBpp0082066"/>
<dbReference type="DNASU" id="41529"/>
<dbReference type="EnsemblMetazoa" id="FBtr0082594">
    <property type="protein sequence ID" value="FBpp0082066"/>
    <property type="gene ID" value="FBgn0038046"/>
</dbReference>
<dbReference type="GeneID" id="41529"/>
<dbReference type="KEGG" id="dme:Dmel_CG5641"/>
<dbReference type="AGR" id="FB:FBgn0038046"/>
<dbReference type="FlyBase" id="FBgn0038046">
    <property type="gene designation" value="CG5641"/>
</dbReference>
<dbReference type="VEuPathDB" id="VectorBase:FBgn0038046"/>
<dbReference type="eggNOG" id="KOG3793">
    <property type="taxonomic scope" value="Eukaryota"/>
</dbReference>
<dbReference type="GeneTree" id="ENSGT00940000154879"/>
<dbReference type="HOGENOM" id="CLU_064863_1_0_1"/>
<dbReference type="InParanoid" id="Q9VG73"/>
<dbReference type="OMA" id="LEPEIHM"/>
<dbReference type="OrthoDB" id="5775647at2759"/>
<dbReference type="PhylomeDB" id="Q9VG73"/>
<dbReference type="Reactome" id="R-DME-6798695">
    <property type="pathway name" value="Neutrophil degranulation"/>
</dbReference>
<dbReference type="Reactome" id="R-DME-9833482">
    <property type="pathway name" value="PKR-mediated signaling"/>
</dbReference>
<dbReference type="BioGRID-ORCS" id="41529">
    <property type="hits" value="0 hits in 1 CRISPR screen"/>
</dbReference>
<dbReference type="GenomeRNAi" id="41529"/>
<dbReference type="PRO" id="PR:Q9VG73"/>
<dbReference type="Proteomes" id="UP000000803">
    <property type="component" value="Chromosome 3R"/>
</dbReference>
<dbReference type="Bgee" id="FBgn0038046">
    <property type="expression patterns" value="Expressed in T neuron T4d (Drosophila) in embryonic/larval optic lobe (Drosophila) and 102 other cell types or tissues"/>
</dbReference>
<dbReference type="GO" id="GO:0071013">
    <property type="term" value="C:catalytic step 2 spliceosome"/>
    <property type="evidence" value="ECO:0007005"/>
    <property type="project" value="FlyBase"/>
</dbReference>
<dbReference type="GO" id="GO:0005730">
    <property type="term" value="C:nucleolus"/>
    <property type="evidence" value="ECO:0000250"/>
    <property type="project" value="UniProtKB"/>
</dbReference>
<dbReference type="GO" id="GO:0005634">
    <property type="term" value="C:nucleus"/>
    <property type="evidence" value="ECO:0000250"/>
    <property type="project" value="UniProtKB"/>
</dbReference>
<dbReference type="GO" id="GO:0071011">
    <property type="term" value="C:precatalytic spliceosome"/>
    <property type="evidence" value="ECO:0007005"/>
    <property type="project" value="FlyBase"/>
</dbReference>
<dbReference type="GO" id="GO:0003677">
    <property type="term" value="F:DNA binding"/>
    <property type="evidence" value="ECO:0000250"/>
    <property type="project" value="UniProtKB"/>
</dbReference>
<dbReference type="GO" id="GO:0003725">
    <property type="term" value="F:double-stranded RNA binding"/>
    <property type="evidence" value="ECO:0000250"/>
    <property type="project" value="UniProtKB"/>
</dbReference>
<dbReference type="GO" id="GO:0000398">
    <property type="term" value="P:mRNA splicing, via spliceosome"/>
    <property type="evidence" value="ECO:0000305"/>
    <property type="project" value="FlyBase"/>
</dbReference>
<dbReference type="GO" id="GO:0045893">
    <property type="term" value="P:positive regulation of DNA-templated transcription"/>
    <property type="evidence" value="ECO:0000250"/>
    <property type="project" value="UniProtKB"/>
</dbReference>
<dbReference type="FunFam" id="3.30.460.10:FF:000017">
    <property type="entry name" value="Interleukin enhancer-binding factor 2"/>
    <property type="match status" value="1"/>
</dbReference>
<dbReference type="Gene3D" id="1.10.1410.40">
    <property type="match status" value="1"/>
</dbReference>
<dbReference type="Gene3D" id="3.30.460.10">
    <property type="entry name" value="Beta Polymerase, domain 2"/>
    <property type="match status" value="1"/>
</dbReference>
<dbReference type="InterPro" id="IPR006561">
    <property type="entry name" value="DZF_dom"/>
</dbReference>
<dbReference type="InterPro" id="IPR049402">
    <property type="entry name" value="DZF_dom_C"/>
</dbReference>
<dbReference type="InterPro" id="IPR049401">
    <property type="entry name" value="DZF_dom_N"/>
</dbReference>
<dbReference type="InterPro" id="IPR052134">
    <property type="entry name" value="ILF2"/>
</dbReference>
<dbReference type="InterPro" id="IPR043519">
    <property type="entry name" value="NT_sf"/>
</dbReference>
<dbReference type="PANTHER" id="PTHR46447">
    <property type="entry name" value="INTERLEUKIN ENHANCER-BINDING FACTOR"/>
    <property type="match status" value="1"/>
</dbReference>
<dbReference type="PANTHER" id="PTHR46447:SF1">
    <property type="entry name" value="INTERLEUKIN ENHANCER-BINDING FACTOR 2"/>
    <property type="match status" value="1"/>
</dbReference>
<dbReference type="Pfam" id="PF20965">
    <property type="entry name" value="DZF_C"/>
    <property type="match status" value="1"/>
</dbReference>
<dbReference type="Pfam" id="PF07528">
    <property type="entry name" value="DZF_N"/>
    <property type="match status" value="1"/>
</dbReference>
<dbReference type="SMART" id="SM00572">
    <property type="entry name" value="DZF"/>
    <property type="match status" value="1"/>
</dbReference>
<dbReference type="SUPFAM" id="SSF81301">
    <property type="entry name" value="Nucleotidyltransferase"/>
    <property type="match status" value="1"/>
</dbReference>
<dbReference type="PROSITE" id="PS51703">
    <property type="entry name" value="DZF"/>
    <property type="match status" value="1"/>
</dbReference>
<sequence>MVRGALRGGRPMRGGIRPPFKKTFVPRHPFDLTLAEVFFPKVPSAGAVDDSALTAALLKRNQDLSPTPSEQTAIGNLVTKVQAVLDNLVVAPGDLTTCQLEEVRQVGSFKKGTILTGNNVADVVVILKTLPTKEAVDALAKKVEADLKASMKTEVLTKGDQHTVQIHERGFDIANVHAKVRILIATLPQNLRKLEPEIHLDHKLMQSHLAAIRHTRWFEENAHHSSIKVLIRILKDLTRRFDAFSPLSAWMLDLIAHLAIMNNPSRQALPINLAFRRVFQLLSAGLFLPGSAGITDPTEPGHIRVHTAMTLEQQDVCCYTSQTLLRVLAHGGYKHILGLEGNTSVVREMSVWNGVCISPLTAVYEKPTDKKEGDLEEDIDMIENENEEEGSDDGAE</sequence>